<reference key="1">
    <citation type="journal article" date="2004" name="Proc. Natl. Acad. Sci. U.S.A.">
        <title>Genome sequence of the deep-sea gamma-proteobacterium Idiomarina loihiensis reveals amino acid fermentation as a source of carbon and energy.</title>
        <authorList>
            <person name="Hou S."/>
            <person name="Saw J.H."/>
            <person name="Lee K.S."/>
            <person name="Freitas T.A."/>
            <person name="Belisle C."/>
            <person name="Kawarabayasi Y."/>
            <person name="Donachie S.P."/>
            <person name="Pikina A."/>
            <person name="Galperin M.Y."/>
            <person name="Koonin E.V."/>
            <person name="Makarova K.S."/>
            <person name="Omelchenko M.V."/>
            <person name="Sorokin A."/>
            <person name="Wolf Y.I."/>
            <person name="Li Q.X."/>
            <person name="Keum Y.S."/>
            <person name="Campbell S."/>
            <person name="Denery J."/>
            <person name="Aizawa S."/>
            <person name="Shibata S."/>
            <person name="Malahoff A."/>
            <person name="Alam M."/>
        </authorList>
    </citation>
    <scope>NUCLEOTIDE SEQUENCE [LARGE SCALE GENOMIC DNA]</scope>
    <source>
        <strain>ATCC BAA-735 / DSM 15497 / L2-TR</strain>
    </source>
</reference>
<proteinExistence type="inferred from homology"/>
<evidence type="ECO:0000255" key="1">
    <source>
        <dbReference type="HAMAP-Rule" id="MF_00110"/>
    </source>
</evidence>
<feature type="chain" id="PRO_0000231092" description="3-dehydroquinate synthase">
    <location>
        <begin position="1"/>
        <end position="357"/>
    </location>
</feature>
<feature type="binding site" evidence="1">
    <location>
        <begin position="69"/>
        <end position="74"/>
    </location>
    <ligand>
        <name>NAD(+)</name>
        <dbReference type="ChEBI" id="CHEBI:57540"/>
    </ligand>
</feature>
<feature type="binding site" evidence="1">
    <location>
        <begin position="103"/>
        <end position="107"/>
    </location>
    <ligand>
        <name>NAD(+)</name>
        <dbReference type="ChEBI" id="CHEBI:57540"/>
    </ligand>
</feature>
<feature type="binding site" evidence="1">
    <location>
        <begin position="127"/>
        <end position="128"/>
    </location>
    <ligand>
        <name>NAD(+)</name>
        <dbReference type="ChEBI" id="CHEBI:57540"/>
    </ligand>
</feature>
<feature type="binding site" evidence="1">
    <location>
        <position position="140"/>
    </location>
    <ligand>
        <name>NAD(+)</name>
        <dbReference type="ChEBI" id="CHEBI:57540"/>
    </ligand>
</feature>
<feature type="binding site" evidence="1">
    <location>
        <position position="149"/>
    </location>
    <ligand>
        <name>NAD(+)</name>
        <dbReference type="ChEBI" id="CHEBI:57540"/>
    </ligand>
</feature>
<feature type="binding site" evidence="1">
    <location>
        <begin position="167"/>
        <end position="170"/>
    </location>
    <ligand>
        <name>NAD(+)</name>
        <dbReference type="ChEBI" id="CHEBI:57540"/>
    </ligand>
</feature>
<feature type="binding site" evidence="1">
    <location>
        <position position="182"/>
    </location>
    <ligand>
        <name>Zn(2+)</name>
        <dbReference type="ChEBI" id="CHEBI:29105"/>
    </ligand>
</feature>
<feature type="binding site" evidence="1">
    <location>
        <position position="245"/>
    </location>
    <ligand>
        <name>Zn(2+)</name>
        <dbReference type="ChEBI" id="CHEBI:29105"/>
    </ligand>
</feature>
<feature type="binding site" evidence="1">
    <location>
        <position position="262"/>
    </location>
    <ligand>
        <name>Zn(2+)</name>
        <dbReference type="ChEBI" id="CHEBI:29105"/>
    </ligand>
</feature>
<accession>Q5QV59</accession>
<dbReference type="EC" id="4.2.3.4" evidence="1"/>
<dbReference type="EMBL" id="AE017340">
    <property type="protein sequence ID" value="AAV83305.1"/>
    <property type="molecule type" value="Genomic_DNA"/>
</dbReference>
<dbReference type="RefSeq" id="WP_011235697.1">
    <property type="nucleotide sequence ID" value="NC_006512.1"/>
</dbReference>
<dbReference type="SMR" id="Q5QV59"/>
<dbReference type="STRING" id="283942.IL2473"/>
<dbReference type="GeneID" id="41337667"/>
<dbReference type="KEGG" id="ilo:IL2473"/>
<dbReference type="eggNOG" id="COG0337">
    <property type="taxonomic scope" value="Bacteria"/>
</dbReference>
<dbReference type="HOGENOM" id="CLU_001201_0_2_6"/>
<dbReference type="OrthoDB" id="9806583at2"/>
<dbReference type="UniPathway" id="UPA00053">
    <property type="reaction ID" value="UER00085"/>
</dbReference>
<dbReference type="Proteomes" id="UP000001171">
    <property type="component" value="Chromosome"/>
</dbReference>
<dbReference type="GO" id="GO:0005737">
    <property type="term" value="C:cytoplasm"/>
    <property type="evidence" value="ECO:0007669"/>
    <property type="project" value="UniProtKB-SubCell"/>
</dbReference>
<dbReference type="GO" id="GO:0003856">
    <property type="term" value="F:3-dehydroquinate synthase activity"/>
    <property type="evidence" value="ECO:0007669"/>
    <property type="project" value="UniProtKB-UniRule"/>
</dbReference>
<dbReference type="GO" id="GO:0046872">
    <property type="term" value="F:metal ion binding"/>
    <property type="evidence" value="ECO:0007669"/>
    <property type="project" value="UniProtKB-KW"/>
</dbReference>
<dbReference type="GO" id="GO:0000166">
    <property type="term" value="F:nucleotide binding"/>
    <property type="evidence" value="ECO:0007669"/>
    <property type="project" value="UniProtKB-KW"/>
</dbReference>
<dbReference type="GO" id="GO:0008652">
    <property type="term" value="P:amino acid biosynthetic process"/>
    <property type="evidence" value="ECO:0007669"/>
    <property type="project" value="UniProtKB-KW"/>
</dbReference>
<dbReference type="GO" id="GO:0009073">
    <property type="term" value="P:aromatic amino acid family biosynthetic process"/>
    <property type="evidence" value="ECO:0007669"/>
    <property type="project" value="UniProtKB-KW"/>
</dbReference>
<dbReference type="GO" id="GO:0009423">
    <property type="term" value="P:chorismate biosynthetic process"/>
    <property type="evidence" value="ECO:0007669"/>
    <property type="project" value="UniProtKB-UniRule"/>
</dbReference>
<dbReference type="CDD" id="cd08195">
    <property type="entry name" value="DHQS"/>
    <property type="match status" value="1"/>
</dbReference>
<dbReference type="FunFam" id="3.40.50.1970:FF:000001">
    <property type="entry name" value="3-dehydroquinate synthase"/>
    <property type="match status" value="1"/>
</dbReference>
<dbReference type="Gene3D" id="3.40.50.1970">
    <property type="match status" value="1"/>
</dbReference>
<dbReference type="Gene3D" id="1.20.1090.10">
    <property type="entry name" value="Dehydroquinate synthase-like - alpha domain"/>
    <property type="match status" value="1"/>
</dbReference>
<dbReference type="HAMAP" id="MF_00110">
    <property type="entry name" value="DHQ_synthase"/>
    <property type="match status" value="1"/>
</dbReference>
<dbReference type="InterPro" id="IPR050071">
    <property type="entry name" value="Dehydroquinate_synthase"/>
</dbReference>
<dbReference type="InterPro" id="IPR016037">
    <property type="entry name" value="DHQ_synth_AroB"/>
</dbReference>
<dbReference type="InterPro" id="IPR030963">
    <property type="entry name" value="DHQ_synth_fam"/>
</dbReference>
<dbReference type="InterPro" id="IPR030960">
    <property type="entry name" value="DHQS/DOIS_N"/>
</dbReference>
<dbReference type="InterPro" id="IPR056179">
    <property type="entry name" value="DHQS_C"/>
</dbReference>
<dbReference type="NCBIfam" id="TIGR01357">
    <property type="entry name" value="aroB"/>
    <property type="match status" value="1"/>
</dbReference>
<dbReference type="PANTHER" id="PTHR43622">
    <property type="entry name" value="3-DEHYDROQUINATE SYNTHASE"/>
    <property type="match status" value="1"/>
</dbReference>
<dbReference type="PANTHER" id="PTHR43622:SF7">
    <property type="entry name" value="3-DEHYDROQUINATE SYNTHASE, CHLOROPLASTIC"/>
    <property type="match status" value="1"/>
</dbReference>
<dbReference type="Pfam" id="PF01761">
    <property type="entry name" value="DHQ_synthase"/>
    <property type="match status" value="1"/>
</dbReference>
<dbReference type="Pfam" id="PF24621">
    <property type="entry name" value="DHQS_C"/>
    <property type="match status" value="1"/>
</dbReference>
<dbReference type="PIRSF" id="PIRSF001455">
    <property type="entry name" value="DHQ_synth"/>
    <property type="match status" value="1"/>
</dbReference>
<dbReference type="SUPFAM" id="SSF56796">
    <property type="entry name" value="Dehydroquinate synthase-like"/>
    <property type="match status" value="1"/>
</dbReference>
<protein>
    <recommendedName>
        <fullName evidence="1">3-dehydroquinate synthase</fullName>
        <shortName evidence="1">DHQS</shortName>
        <ecNumber evidence="1">4.2.3.4</ecNumber>
    </recommendedName>
</protein>
<sequence>MAEVNVSLGERSYTIYIGNALLPNYVERLPHKLNQQLLVITNPTISQYYLKPLLKSLAGHQVKVFEMRDGEQFKSLDSYAEAMDILIDAGFNRDCGIIALGGGVVGDLAGFVASTFQRGVDFYQIPTTLLSQVDSSVGGKTAVNHPQGKNLIGAFYQPKSVVIDIDCLQTLTERDYRSGLAEIVKYGVIYDADFFQWLEQHAKELNQQDPAALTYAIQRSCEIKAEVVALDEREKGLRALLNLGHTFGHAIEAATEYGAWTHGEAVAAGIIIASKLSEVTQRLNSSDFRRIKDLLLALSLPTKGPQMPWQDWLDYMQRDKKVKDGQLHFVLPVAIGQAEVVSTVEHNTVTAVITECC</sequence>
<gene>
    <name evidence="1" type="primary">aroB</name>
    <name type="ordered locus">IL2473</name>
</gene>
<comment type="function">
    <text evidence="1">Catalyzes the conversion of 3-deoxy-D-arabino-heptulosonate 7-phosphate (DAHP) to dehydroquinate (DHQ).</text>
</comment>
<comment type="catalytic activity">
    <reaction evidence="1">
        <text>7-phospho-2-dehydro-3-deoxy-D-arabino-heptonate = 3-dehydroquinate + phosphate</text>
        <dbReference type="Rhea" id="RHEA:21968"/>
        <dbReference type="ChEBI" id="CHEBI:32364"/>
        <dbReference type="ChEBI" id="CHEBI:43474"/>
        <dbReference type="ChEBI" id="CHEBI:58394"/>
        <dbReference type="EC" id="4.2.3.4"/>
    </reaction>
</comment>
<comment type="cofactor">
    <cofactor evidence="1">
        <name>Co(2+)</name>
        <dbReference type="ChEBI" id="CHEBI:48828"/>
    </cofactor>
    <cofactor evidence="1">
        <name>Zn(2+)</name>
        <dbReference type="ChEBI" id="CHEBI:29105"/>
    </cofactor>
    <text evidence="1">Binds 1 divalent metal cation per subunit. Can use either Co(2+) or Zn(2+).</text>
</comment>
<comment type="cofactor">
    <cofactor evidence="1">
        <name>NAD(+)</name>
        <dbReference type="ChEBI" id="CHEBI:57540"/>
    </cofactor>
</comment>
<comment type="pathway">
    <text evidence="1">Metabolic intermediate biosynthesis; chorismate biosynthesis; chorismate from D-erythrose 4-phosphate and phosphoenolpyruvate: step 2/7.</text>
</comment>
<comment type="subcellular location">
    <subcellularLocation>
        <location evidence="1">Cytoplasm</location>
    </subcellularLocation>
</comment>
<comment type="similarity">
    <text evidence="1">Belongs to the sugar phosphate cyclases superfamily. Dehydroquinate synthase family.</text>
</comment>
<keyword id="KW-0028">Amino-acid biosynthesis</keyword>
<keyword id="KW-0057">Aromatic amino acid biosynthesis</keyword>
<keyword id="KW-0170">Cobalt</keyword>
<keyword id="KW-0963">Cytoplasm</keyword>
<keyword id="KW-0456">Lyase</keyword>
<keyword id="KW-0479">Metal-binding</keyword>
<keyword id="KW-0520">NAD</keyword>
<keyword id="KW-0547">Nucleotide-binding</keyword>
<keyword id="KW-1185">Reference proteome</keyword>
<keyword id="KW-0862">Zinc</keyword>
<name>AROB_IDILO</name>
<organism>
    <name type="scientific">Idiomarina loihiensis (strain ATCC BAA-735 / DSM 15497 / L2-TR)</name>
    <dbReference type="NCBI Taxonomy" id="283942"/>
    <lineage>
        <taxon>Bacteria</taxon>
        <taxon>Pseudomonadati</taxon>
        <taxon>Pseudomonadota</taxon>
        <taxon>Gammaproteobacteria</taxon>
        <taxon>Alteromonadales</taxon>
        <taxon>Idiomarinaceae</taxon>
        <taxon>Idiomarina</taxon>
    </lineage>
</organism>